<keyword id="KW-0150">Chloroplast</keyword>
<keyword id="KW-0472">Membrane</keyword>
<keyword id="KW-0934">Plastid</keyword>
<keyword id="KW-1185">Reference proteome</keyword>
<keyword id="KW-0809">Transit peptide</keyword>
<keyword id="KW-0812">Transmembrane</keyword>
<keyword id="KW-1133">Transmembrane helix</keyword>
<keyword id="KW-0813">Transport</keyword>
<sequence length="542" mass="59507">MERIMINPLLSIQNSPTKFLKPPLSSIHRQQQQQERQSNNNTLFMGEARPRRATTFACLSIRRRRNNNGVSEFEETARFEQVGGKGISVLCGLGYWVQGSRCFPWLALNFHMVHSLALQPSTLQLVQYSCSLPMVAKPLYGVLSDVLYIGSGRRVPYIAIGVFLQVLAWGSMGIFQGAREVLPSLVACVLLSNLGASITEVAKDALVAEYGLRYRINGLQSYALMASAAGGVLGNLLGGYLLLTTPPKISFLVFSALLSLQLVVSLSSKEESFGLPRIAETSSVLESVKKQISNLKEAIQADEISQPLIWAVVSIAMVPLLSGSVFCYQTQVLNLDPSVIGMSKVIGQLMLLCLTVVYDRYLKTLPMRPLIHIIQLLYGLSILLDYILVKQINLGFGISNEVYVLCFSSLAEILAQFKILPFAVRLASMCPQGCEGSVTSFLASTLCLSQIVSAFLGVGLANLIGITSSNYSNLSSGILIQSLAALAPLCFMHLVPMSEPVIEKEGKRGISKRSRRNRRVGRVVDKESVTYRRERESEEAQR</sequence>
<evidence type="ECO:0000250" key="1"/>
<evidence type="ECO:0000255" key="2"/>
<evidence type="ECO:0000256" key="3">
    <source>
        <dbReference type="SAM" id="MobiDB-lite"/>
    </source>
</evidence>
<evidence type="ECO:0000305" key="4"/>
<dbReference type="EMBL" id="AC002376">
    <property type="protein sequence ID" value="AAB80629.1"/>
    <property type="status" value="ALT_SEQ"/>
    <property type="molecule type" value="Genomic_DNA"/>
</dbReference>
<dbReference type="EMBL" id="CP002684">
    <property type="protein sequence ID" value="AEE27716.1"/>
    <property type="molecule type" value="Genomic_DNA"/>
</dbReference>
<dbReference type="EMBL" id="AK117774">
    <property type="protein sequence ID" value="BAC42421.1"/>
    <property type="molecule type" value="mRNA"/>
</dbReference>
<dbReference type="EMBL" id="BT005916">
    <property type="protein sequence ID" value="AAO64851.1"/>
    <property type="molecule type" value="mRNA"/>
</dbReference>
<dbReference type="PIR" id="C86178">
    <property type="entry name" value="C86178"/>
</dbReference>
<dbReference type="RefSeq" id="NP_171951.2">
    <property type="nucleotide sequence ID" value="NM_100336.3"/>
</dbReference>
<dbReference type="STRING" id="3702.F4I5Q2"/>
<dbReference type="PaxDb" id="3702-AT1G04570.1"/>
<dbReference type="ProteomicsDB" id="222584"/>
<dbReference type="EnsemblPlants" id="AT1G04570.1">
    <property type="protein sequence ID" value="AT1G04570.1"/>
    <property type="gene ID" value="AT1G04570"/>
</dbReference>
<dbReference type="GeneID" id="839486"/>
<dbReference type="Gramene" id="AT1G04570.1">
    <property type="protein sequence ID" value="AT1G04570.1"/>
    <property type="gene ID" value="AT1G04570"/>
</dbReference>
<dbReference type="KEGG" id="ath:AT1G04570"/>
<dbReference type="Araport" id="AT1G04570"/>
<dbReference type="TAIR" id="AT1G04570"/>
<dbReference type="eggNOG" id="ENOG502QSTI">
    <property type="taxonomic scope" value="Eukaryota"/>
</dbReference>
<dbReference type="HOGENOM" id="CLU_018563_0_0_1"/>
<dbReference type="InParanoid" id="F4I5Q2"/>
<dbReference type="OMA" id="QYSCSLP"/>
<dbReference type="OrthoDB" id="1923497at2759"/>
<dbReference type="PRO" id="PR:F4I5Q2"/>
<dbReference type="Proteomes" id="UP000006548">
    <property type="component" value="Chromosome 1"/>
</dbReference>
<dbReference type="ExpressionAtlas" id="F4I5Q2">
    <property type="expression patterns" value="baseline and differential"/>
</dbReference>
<dbReference type="GO" id="GO:0031969">
    <property type="term" value="C:chloroplast membrane"/>
    <property type="evidence" value="ECO:0007669"/>
    <property type="project" value="UniProtKB-SubCell"/>
</dbReference>
<dbReference type="Gene3D" id="1.20.1250.20">
    <property type="entry name" value="MFS general substrate transporter like domains"/>
    <property type="match status" value="1"/>
</dbReference>
<dbReference type="InterPro" id="IPR039309">
    <property type="entry name" value="BT1"/>
</dbReference>
<dbReference type="InterPro" id="IPR004324">
    <property type="entry name" value="FBT"/>
</dbReference>
<dbReference type="InterPro" id="IPR036259">
    <property type="entry name" value="MFS_trans_sf"/>
</dbReference>
<dbReference type="NCBIfam" id="TIGR00788">
    <property type="entry name" value="fbt"/>
    <property type="match status" value="1"/>
</dbReference>
<dbReference type="PANTHER" id="PTHR31585">
    <property type="entry name" value="FOLATE-BIOPTERIN TRANSPORTER 1, CHLOROPLASTIC"/>
    <property type="match status" value="1"/>
</dbReference>
<dbReference type="PANTHER" id="PTHR31585:SF47">
    <property type="entry name" value="FOLATE-BIOPTERIN TRANSPORTER 8, CHLOROPLASTIC-RELATED"/>
    <property type="match status" value="1"/>
</dbReference>
<dbReference type="Pfam" id="PF03092">
    <property type="entry name" value="BT1"/>
    <property type="match status" value="1"/>
</dbReference>
<dbReference type="SUPFAM" id="SSF103473">
    <property type="entry name" value="MFS general substrate transporter"/>
    <property type="match status" value="1"/>
</dbReference>
<name>FBT8_ARATH</name>
<gene>
    <name type="ordered locus">At1g04570</name>
    <name type="ORF">T1G11.18</name>
</gene>
<proteinExistence type="evidence at transcript level"/>
<feature type="transit peptide" description="Chloroplast" evidence="2">
    <location>
        <begin position="1"/>
        <end position="78"/>
    </location>
</feature>
<feature type="chain" id="PRO_0000420120" description="Probable folate-biopterin transporter 8, chloroplastic">
    <location>
        <begin position="79"/>
        <end position="542"/>
    </location>
</feature>
<feature type="transmembrane region" description="Helical" evidence="2">
    <location>
        <begin position="103"/>
        <end position="123"/>
    </location>
</feature>
<feature type="transmembrane region" description="Helical" evidence="2">
    <location>
        <begin position="132"/>
        <end position="152"/>
    </location>
</feature>
<feature type="transmembrane region" description="Helical" evidence="2">
    <location>
        <begin position="155"/>
        <end position="175"/>
    </location>
</feature>
<feature type="transmembrane region" description="Helical" evidence="2">
    <location>
        <begin position="181"/>
        <end position="201"/>
    </location>
</feature>
<feature type="transmembrane region" description="Helical" evidence="2">
    <location>
        <begin position="223"/>
        <end position="243"/>
    </location>
</feature>
<feature type="transmembrane region" description="Helical" evidence="2">
    <location>
        <begin position="246"/>
        <end position="266"/>
    </location>
</feature>
<feature type="transmembrane region" description="Helical" evidence="2">
    <location>
        <begin position="308"/>
        <end position="328"/>
    </location>
</feature>
<feature type="transmembrane region" description="Helical" evidence="2">
    <location>
        <begin position="338"/>
        <end position="358"/>
    </location>
</feature>
<feature type="transmembrane region" description="Helical" evidence="2">
    <location>
        <begin position="369"/>
        <end position="389"/>
    </location>
</feature>
<feature type="transmembrane region" description="Helical" evidence="2">
    <location>
        <begin position="404"/>
        <end position="424"/>
    </location>
</feature>
<feature type="transmembrane region" description="Helical" evidence="2">
    <location>
        <begin position="446"/>
        <end position="466"/>
    </location>
</feature>
<feature type="transmembrane region" description="Helical" evidence="2">
    <location>
        <begin position="477"/>
        <end position="497"/>
    </location>
</feature>
<feature type="region of interest" description="Disordered" evidence="3">
    <location>
        <begin position="24"/>
        <end position="45"/>
    </location>
</feature>
<feature type="region of interest" description="Disordered" evidence="3">
    <location>
        <begin position="506"/>
        <end position="542"/>
    </location>
</feature>
<feature type="compositionally biased region" description="Basic residues" evidence="3">
    <location>
        <begin position="509"/>
        <end position="521"/>
    </location>
</feature>
<feature type="compositionally biased region" description="Basic and acidic residues" evidence="3">
    <location>
        <begin position="522"/>
        <end position="542"/>
    </location>
</feature>
<feature type="sequence conflict" description="In Ref. 3; BAC42421 and 4; AAO64851." evidence="4" ref="3 4">
    <original>N</original>
    <variation>S</variation>
    <location>
        <position position="235"/>
    </location>
</feature>
<accession>F4I5Q2</accession>
<accession>O23028</accession>
<accession>Q8GYA1</accession>
<organism>
    <name type="scientific">Arabidopsis thaliana</name>
    <name type="common">Mouse-ear cress</name>
    <dbReference type="NCBI Taxonomy" id="3702"/>
    <lineage>
        <taxon>Eukaryota</taxon>
        <taxon>Viridiplantae</taxon>
        <taxon>Streptophyta</taxon>
        <taxon>Embryophyta</taxon>
        <taxon>Tracheophyta</taxon>
        <taxon>Spermatophyta</taxon>
        <taxon>Magnoliopsida</taxon>
        <taxon>eudicotyledons</taxon>
        <taxon>Gunneridae</taxon>
        <taxon>Pentapetalae</taxon>
        <taxon>rosids</taxon>
        <taxon>malvids</taxon>
        <taxon>Brassicales</taxon>
        <taxon>Brassicaceae</taxon>
        <taxon>Camelineae</taxon>
        <taxon>Arabidopsis</taxon>
    </lineage>
</organism>
<reference key="1">
    <citation type="journal article" date="2000" name="Nature">
        <title>Sequence and analysis of chromosome 1 of the plant Arabidopsis thaliana.</title>
        <authorList>
            <person name="Theologis A."/>
            <person name="Ecker J.R."/>
            <person name="Palm C.J."/>
            <person name="Federspiel N.A."/>
            <person name="Kaul S."/>
            <person name="White O."/>
            <person name="Alonso J."/>
            <person name="Altafi H."/>
            <person name="Araujo R."/>
            <person name="Bowman C.L."/>
            <person name="Brooks S.Y."/>
            <person name="Buehler E."/>
            <person name="Chan A."/>
            <person name="Chao Q."/>
            <person name="Chen H."/>
            <person name="Cheuk R.F."/>
            <person name="Chin C.W."/>
            <person name="Chung M.K."/>
            <person name="Conn L."/>
            <person name="Conway A.B."/>
            <person name="Conway A.R."/>
            <person name="Creasy T.H."/>
            <person name="Dewar K."/>
            <person name="Dunn P."/>
            <person name="Etgu P."/>
            <person name="Feldblyum T.V."/>
            <person name="Feng J.-D."/>
            <person name="Fong B."/>
            <person name="Fujii C.Y."/>
            <person name="Gill J.E."/>
            <person name="Goldsmith A.D."/>
            <person name="Haas B."/>
            <person name="Hansen N.F."/>
            <person name="Hughes B."/>
            <person name="Huizar L."/>
            <person name="Hunter J.L."/>
            <person name="Jenkins J."/>
            <person name="Johnson-Hopson C."/>
            <person name="Khan S."/>
            <person name="Khaykin E."/>
            <person name="Kim C.J."/>
            <person name="Koo H.L."/>
            <person name="Kremenetskaia I."/>
            <person name="Kurtz D.B."/>
            <person name="Kwan A."/>
            <person name="Lam B."/>
            <person name="Langin-Hooper S."/>
            <person name="Lee A."/>
            <person name="Lee J.M."/>
            <person name="Lenz C.A."/>
            <person name="Li J.H."/>
            <person name="Li Y.-P."/>
            <person name="Lin X."/>
            <person name="Liu S.X."/>
            <person name="Liu Z.A."/>
            <person name="Luros J.S."/>
            <person name="Maiti R."/>
            <person name="Marziali A."/>
            <person name="Militscher J."/>
            <person name="Miranda M."/>
            <person name="Nguyen M."/>
            <person name="Nierman W.C."/>
            <person name="Osborne B.I."/>
            <person name="Pai G."/>
            <person name="Peterson J."/>
            <person name="Pham P.K."/>
            <person name="Rizzo M."/>
            <person name="Rooney T."/>
            <person name="Rowley D."/>
            <person name="Sakano H."/>
            <person name="Salzberg S.L."/>
            <person name="Schwartz J.R."/>
            <person name="Shinn P."/>
            <person name="Southwick A.M."/>
            <person name="Sun H."/>
            <person name="Tallon L.J."/>
            <person name="Tambunga G."/>
            <person name="Toriumi M.J."/>
            <person name="Town C.D."/>
            <person name="Utterback T."/>
            <person name="Van Aken S."/>
            <person name="Vaysberg M."/>
            <person name="Vysotskaia V.S."/>
            <person name="Walker M."/>
            <person name="Wu D."/>
            <person name="Yu G."/>
            <person name="Fraser C.M."/>
            <person name="Venter J.C."/>
            <person name="Davis R.W."/>
        </authorList>
    </citation>
    <scope>NUCLEOTIDE SEQUENCE [LARGE SCALE GENOMIC DNA]</scope>
    <source>
        <strain>cv. Columbia</strain>
    </source>
</reference>
<reference key="2">
    <citation type="journal article" date="2017" name="Plant J.">
        <title>Araport11: a complete reannotation of the Arabidopsis thaliana reference genome.</title>
        <authorList>
            <person name="Cheng C.Y."/>
            <person name="Krishnakumar V."/>
            <person name="Chan A.P."/>
            <person name="Thibaud-Nissen F."/>
            <person name="Schobel S."/>
            <person name="Town C.D."/>
        </authorList>
    </citation>
    <scope>GENOME REANNOTATION</scope>
    <source>
        <strain>cv. Columbia</strain>
    </source>
</reference>
<reference key="3">
    <citation type="journal article" date="2002" name="Science">
        <title>Functional annotation of a full-length Arabidopsis cDNA collection.</title>
        <authorList>
            <person name="Seki M."/>
            <person name="Narusaka M."/>
            <person name="Kamiya A."/>
            <person name="Ishida J."/>
            <person name="Satou M."/>
            <person name="Sakurai T."/>
            <person name="Nakajima M."/>
            <person name="Enju A."/>
            <person name="Akiyama K."/>
            <person name="Oono Y."/>
            <person name="Muramatsu M."/>
            <person name="Hayashizaki Y."/>
            <person name="Kawai J."/>
            <person name="Carninci P."/>
            <person name="Itoh M."/>
            <person name="Ishii Y."/>
            <person name="Arakawa T."/>
            <person name="Shibata K."/>
            <person name="Shinagawa A."/>
            <person name="Shinozaki K."/>
        </authorList>
    </citation>
    <scope>NUCLEOTIDE SEQUENCE [LARGE SCALE MRNA]</scope>
    <source>
        <strain>cv. Columbia</strain>
    </source>
</reference>
<reference key="4">
    <citation type="journal article" date="2003" name="Science">
        <title>Empirical analysis of transcriptional activity in the Arabidopsis genome.</title>
        <authorList>
            <person name="Yamada K."/>
            <person name="Lim J."/>
            <person name="Dale J.M."/>
            <person name="Chen H."/>
            <person name="Shinn P."/>
            <person name="Palm C.J."/>
            <person name="Southwick A.M."/>
            <person name="Wu H.C."/>
            <person name="Kim C.J."/>
            <person name="Nguyen M."/>
            <person name="Pham P.K."/>
            <person name="Cheuk R.F."/>
            <person name="Karlin-Newmann G."/>
            <person name="Liu S.X."/>
            <person name="Lam B."/>
            <person name="Sakano H."/>
            <person name="Wu T."/>
            <person name="Yu G."/>
            <person name="Miranda M."/>
            <person name="Quach H.L."/>
            <person name="Tripp M."/>
            <person name="Chang C.H."/>
            <person name="Lee J.M."/>
            <person name="Toriumi M.J."/>
            <person name="Chan M.M."/>
            <person name="Tang C.C."/>
            <person name="Onodera C.S."/>
            <person name="Deng J.M."/>
            <person name="Akiyama K."/>
            <person name="Ansari Y."/>
            <person name="Arakawa T."/>
            <person name="Banh J."/>
            <person name="Banno F."/>
            <person name="Bowser L."/>
            <person name="Brooks S.Y."/>
            <person name="Carninci P."/>
            <person name="Chao Q."/>
            <person name="Choy N."/>
            <person name="Enju A."/>
            <person name="Goldsmith A.D."/>
            <person name="Gurjal M."/>
            <person name="Hansen N.F."/>
            <person name="Hayashizaki Y."/>
            <person name="Johnson-Hopson C."/>
            <person name="Hsuan V.W."/>
            <person name="Iida K."/>
            <person name="Karnes M."/>
            <person name="Khan S."/>
            <person name="Koesema E."/>
            <person name="Ishida J."/>
            <person name="Jiang P.X."/>
            <person name="Jones T."/>
            <person name="Kawai J."/>
            <person name="Kamiya A."/>
            <person name="Meyers C."/>
            <person name="Nakajima M."/>
            <person name="Narusaka M."/>
            <person name="Seki M."/>
            <person name="Sakurai T."/>
            <person name="Satou M."/>
            <person name="Tamse R."/>
            <person name="Vaysberg M."/>
            <person name="Wallender E.K."/>
            <person name="Wong C."/>
            <person name="Yamamura Y."/>
            <person name="Yuan S."/>
            <person name="Shinozaki K."/>
            <person name="Davis R.W."/>
            <person name="Theologis A."/>
            <person name="Ecker J.R."/>
        </authorList>
    </citation>
    <scope>NUCLEOTIDE SEQUENCE [LARGE SCALE MRNA]</scope>
    <source>
        <strain>cv. Columbia</strain>
    </source>
</reference>
<reference key="5">
    <citation type="journal article" date="2005" name="J. Biol. Chem.">
        <title>Higher plant plastids and cyanobacteria have folate carriers related to those of trypanosomatids.</title>
        <authorList>
            <person name="Klaus S.M."/>
            <person name="Kunji E.R."/>
            <person name="Bozzo G.G."/>
            <person name="Noiriel A."/>
            <person name="de la Garza R.D."/>
            <person name="Basset G.J."/>
            <person name="Ravanel S."/>
            <person name="Rebeille F."/>
            <person name="Gregory J.F. III"/>
            <person name="Hanson A.D."/>
        </authorList>
    </citation>
    <scope>GENE FAMILY</scope>
</reference>
<protein>
    <recommendedName>
        <fullName>Probable folate-biopterin transporter 8, chloroplastic</fullName>
    </recommendedName>
</protein>
<comment type="function">
    <text evidence="1">Could mediate folate transport.</text>
</comment>
<comment type="subcellular location">
    <subcellularLocation>
        <location evidence="4">Plastid</location>
        <location evidence="4">Chloroplast membrane</location>
        <topology evidence="4">Multi-pass membrane protein</topology>
    </subcellularLocation>
</comment>
<comment type="similarity">
    <text evidence="4">Belongs to the major facilitator superfamily. Folate-biopterin transporter (TC 2.A.71) family.</text>
</comment>
<comment type="sequence caution" evidence="4">
    <conflict type="erroneous gene model prediction">
        <sequence resource="EMBL-CDS" id="AAB80629"/>
    </conflict>
</comment>